<name>CMU1_MYCMD</name>
<keyword id="KW-0002">3D-structure</keyword>
<keyword id="KW-0021">Allosteric enzyme</keyword>
<keyword id="KW-0325">Glycoprotein</keyword>
<keyword id="KW-1035">Host cytoplasm</keyword>
<keyword id="KW-0413">Isomerase</keyword>
<keyword id="KW-1185">Reference proteome</keyword>
<keyword id="KW-0964">Secreted</keyword>
<keyword id="KW-0732">Signal</keyword>
<keyword id="KW-0843">Virulence</keyword>
<gene>
    <name type="primary">CMU1</name>
    <name type="ORF">UMAG_05731</name>
</gene>
<comment type="function">
    <text evidence="4 5">Secreted chorismate mutase that is one component of a cocktail of effectors shaping the host metabolome and acting as virulence factors. The enzyme is taken up by plant cells, can spread to neighboring cells where it affects the biosynthesis of the plant immune signal salicylic acid by channelling chorismate into the phenylpropanoid pathway (PubMed:21976020, PubMed:30651637). Interferes with the activity of host cytosolic chorismate mutase CM2 through heterodimerization (PubMed:21976020).</text>
</comment>
<comment type="catalytic activity">
    <reaction evidence="4 5">
        <text>chorismate = prephenate</text>
        <dbReference type="Rhea" id="RHEA:13897"/>
        <dbReference type="ChEBI" id="CHEBI:29748"/>
        <dbReference type="ChEBI" id="CHEBI:29934"/>
        <dbReference type="EC" id="5.4.99.5"/>
    </reaction>
    <physiologicalReaction direction="left-to-right" evidence="4 5">
        <dbReference type="Rhea" id="RHEA:13898"/>
    </physiologicalReaction>
</comment>
<comment type="activity regulation">
    <text evidence="4 5">Contrary to classical chorismate mutases, CMU1 is not subject to allosteric regulation by tryptophan and tyrosine (PubMed:21976020, PubMed:30651637). Activity is decreased in a non-competitive and allosteric manner by the binding of the host defense kiwellin KWL1 which probably blocks substrate access to the active site of CMU1 (PubMed:30651637).</text>
</comment>
<comment type="biophysicochemical properties">
    <kinetics>
        <KM evidence="5">0.8 mM for chorismate</KM>
        <Vmax evidence="5">40.8 umol/min/mg enzyme</Vmax>
        <Vmax evidence="5">21.1 umol/min/mg enzyme (when bound to host KWL1)</Vmax>
    </kinetics>
</comment>
<comment type="subunit">
    <text evidence="4 5">Homodimer (PubMed:21976020, PubMed:30651637). Forms a heterodimer with the host cytosolic chorismate mutase CM2 (PubMed:21976020). Interacts with the host kiwellin KWL1 which acts as a defense protein that protects maize from infection (PubMed:30651637).</text>
</comment>
<comment type="subcellular location">
    <subcellularLocation>
        <location evidence="4">Secreted</location>
    </subcellularLocation>
    <subcellularLocation>
        <location evidence="4">Host cytoplasm</location>
        <location evidence="4">Host cytosol</location>
    </subcellularLocation>
    <text evidence="4">Is translocated to host plant cells and spreads to neighboring tissue. The spreading is likely to occur through plasmodesmata.</text>
</comment>
<comment type="induction">
    <text evidence="3 4">Expression is specifically up-regulated during biotrophic development (PubMed:21976020). CMU1 is one of the most highly expressed fungal genes during plant colonization (PubMed:20360107).</text>
</comment>
<comment type="domain">
    <text evidence="5">The extensive loop region (ELR) is specific for fungal secreted chorismate mutases and is required for the interaction with the host defense kiwellin KWL1.</text>
</comment>
<comment type="disruption phenotype">
    <text evidence="4">Decreases significantly the amount of tumors produced during host maize infection.</text>
</comment>
<protein>
    <recommendedName>
        <fullName evidence="6">Secreted chorismate mutase</fullName>
        <ecNumber evidence="4">5.4.99.5</ecNumber>
    </recommendedName>
</protein>
<accession>A0A0D1DWQ2</accession>
<reference key="1">
    <citation type="journal article" date="2006" name="Nature">
        <title>Insights from the genome of the biotrophic fungal plant pathogen Ustilago maydis.</title>
        <authorList>
            <person name="Kaemper J."/>
            <person name="Kahmann R."/>
            <person name="Boelker M."/>
            <person name="Ma L.-J."/>
            <person name="Brefort T."/>
            <person name="Saville B.J."/>
            <person name="Banuett F."/>
            <person name="Kronstad J.W."/>
            <person name="Gold S.E."/>
            <person name="Mueller O."/>
            <person name="Perlin M.H."/>
            <person name="Woesten H.A.B."/>
            <person name="de Vries R."/>
            <person name="Ruiz-Herrera J."/>
            <person name="Reynaga-Pena C.G."/>
            <person name="Snetselaar K."/>
            <person name="McCann M."/>
            <person name="Perez-Martin J."/>
            <person name="Feldbruegge M."/>
            <person name="Basse C.W."/>
            <person name="Steinberg G."/>
            <person name="Ibeas J.I."/>
            <person name="Holloman W."/>
            <person name="Guzman P."/>
            <person name="Farman M.L."/>
            <person name="Stajich J.E."/>
            <person name="Sentandreu R."/>
            <person name="Gonzalez-Prieto J.M."/>
            <person name="Kennell J.C."/>
            <person name="Molina L."/>
            <person name="Schirawski J."/>
            <person name="Mendoza-Mendoza A."/>
            <person name="Greilinger D."/>
            <person name="Muench K."/>
            <person name="Roessel N."/>
            <person name="Scherer M."/>
            <person name="Vranes M."/>
            <person name="Ladendorf O."/>
            <person name="Vincon V."/>
            <person name="Fuchs U."/>
            <person name="Sandrock B."/>
            <person name="Meng S."/>
            <person name="Ho E.C.H."/>
            <person name="Cahill M.J."/>
            <person name="Boyce K.J."/>
            <person name="Klose J."/>
            <person name="Klosterman S.J."/>
            <person name="Deelstra H.J."/>
            <person name="Ortiz-Castellanos L."/>
            <person name="Li W."/>
            <person name="Sanchez-Alonso P."/>
            <person name="Schreier P.H."/>
            <person name="Haeuser-Hahn I."/>
            <person name="Vaupel M."/>
            <person name="Koopmann E."/>
            <person name="Friedrich G."/>
            <person name="Voss H."/>
            <person name="Schlueter T."/>
            <person name="Margolis J."/>
            <person name="Platt D."/>
            <person name="Swimmer C."/>
            <person name="Gnirke A."/>
            <person name="Chen F."/>
            <person name="Vysotskaia V."/>
            <person name="Mannhaupt G."/>
            <person name="Gueldener U."/>
            <person name="Muensterkoetter M."/>
            <person name="Haase D."/>
            <person name="Oesterheld M."/>
            <person name="Mewes H.-W."/>
            <person name="Mauceli E.W."/>
            <person name="DeCaprio D."/>
            <person name="Wade C.M."/>
            <person name="Butler J."/>
            <person name="Young S.K."/>
            <person name="Jaffe D.B."/>
            <person name="Calvo S.E."/>
            <person name="Nusbaum C."/>
            <person name="Galagan J.E."/>
            <person name="Birren B.W."/>
        </authorList>
    </citation>
    <scope>NUCLEOTIDE SEQUENCE [LARGE SCALE GENOMIC DNA]</scope>
    <source>
        <strain>DSM 14603 / FGSC 9021 / UM521</strain>
    </source>
</reference>
<reference key="2">
    <citation type="submission" date="2014-09" db="EMBL/GenBank/DDBJ databases">
        <authorList>
            <person name="Gueldener U."/>
            <person name="Muensterkoetter M."/>
            <person name="Walter M.C."/>
            <person name="Mannhaupt G."/>
            <person name="Kahmann R."/>
        </authorList>
    </citation>
    <scope>GENOME REANNOTATION</scope>
    <source>
        <strain>DSM 14603 / FGSC 9021 / UM521</strain>
    </source>
</reference>
<reference key="3">
    <citation type="journal article" date="2010" name="Science">
        <title>Maize tumors caused by Ustilago maydis require organ-specific genes in host and pathogen.</title>
        <authorList>
            <person name="Skibbe D.S."/>
            <person name="Doehlemann G."/>
            <person name="Fernandes J."/>
            <person name="Walbot V."/>
        </authorList>
    </citation>
    <scope>INDUCTION</scope>
</reference>
<reference key="4">
    <citation type="journal article" date="2011" name="Nature">
        <title>Metabolic priming by a secreted fungal effector.</title>
        <authorList>
            <person name="Djamei A."/>
            <person name="Schipper K."/>
            <person name="Rabe F."/>
            <person name="Ghosh A."/>
            <person name="Vincon V."/>
            <person name="Kahnt J."/>
            <person name="Osorio S."/>
            <person name="Tohge T."/>
            <person name="Fernie A.R."/>
            <person name="Feussner I."/>
            <person name="Feussner K."/>
            <person name="Meinicke P."/>
            <person name="Stierhof Y.D."/>
            <person name="Schwarz H."/>
            <person name="Macek B."/>
            <person name="Mann M."/>
            <person name="Kahmann R."/>
        </authorList>
    </citation>
    <scope>FUNCTION</scope>
    <scope>SUBCELLULAR LOCATION</scope>
    <scope>INDUCTION</scope>
    <scope>CATALYTIC ACTIVITY</scope>
    <scope>ACTIVITY REGULATION</scope>
    <scope>DISRUPTION PHENOTYPE</scope>
    <scope>SUBUNIT</scope>
    <scope>MUTAGENESIS OF ARG-183 AND LYS-194</scope>
    <scope>INTERACTION WITH HOST CYTOSOLIC CM2</scope>
</reference>
<reference key="5">
    <citation type="journal article" date="2019" name="Nature">
        <title>A kiwellin disarms the metabolic activity of a secreted fungal virulence factor.</title>
        <authorList>
            <person name="Han X."/>
            <person name="Altegoer F."/>
            <person name="Steinchen W."/>
            <person name="Binnebesel L."/>
            <person name="Schuhmacher J."/>
            <person name="Glatter T."/>
            <person name="Giammarinaro P.I."/>
            <person name="Djamei A."/>
            <person name="Rensing S.A."/>
            <person name="Reissmann S."/>
            <person name="Kahmann R."/>
            <person name="Bange G."/>
        </authorList>
    </citation>
    <scope>X-RAY CRYSTALLOGRAPHY (1.8 ANGSTROMS) OF 22-290 IN COMPLEX WITH HOST KWL1</scope>
    <scope>SUBUNIT</scope>
    <scope>FUNCTION</scope>
    <scope>CATALYTIC ACTIVITY</scope>
    <scope>BIOPHYSICOCHEMICAL PROPERTIES</scope>
    <scope>ACTIVITY REGULATION</scope>
    <scope>DOMAIN</scope>
    <scope>MUTAGENESIS OF 1-MET--ALA-21 AND 117-VAL--ARG-140</scope>
</reference>
<sequence length="290" mass="31859">MKLSVSIFVLLAVSAFGGGSAAAVSGKSEAAEIEAGDRLDALRDQLQRYETPIIQTILARSALGGRAPSEQDEVRAALSRNAFEPSEVISEWLQTESGARFRSTRPLPPAVEFITPVVLSRDTVLDKPVVGKGIFPIGRRPQDPTNMDEFLDTSLLSLNQSSTVDLASAVSLDVSLLHLVSARVLLGYPIALAKFDWLHDNFCHILTNTTLSKSQKLANIIQQLTDHKQEVNVLSRVEQKSKSLSHLFRNDIPYPPHTQDRILRLFQAYLIPITTQIEAAAILDHANKCT</sequence>
<organism>
    <name type="scientific">Mycosarcoma maydis</name>
    <name type="common">Corn smut fungus</name>
    <name type="synonym">Ustilago maydis</name>
    <dbReference type="NCBI Taxonomy" id="5270"/>
    <lineage>
        <taxon>Eukaryota</taxon>
        <taxon>Fungi</taxon>
        <taxon>Dikarya</taxon>
        <taxon>Basidiomycota</taxon>
        <taxon>Ustilaginomycotina</taxon>
        <taxon>Ustilaginomycetes</taxon>
        <taxon>Ustilaginales</taxon>
        <taxon>Ustilaginaceae</taxon>
        <taxon>Mycosarcoma</taxon>
    </lineage>
</organism>
<feature type="signal peptide" evidence="5">
    <location>
        <begin position="1"/>
        <end position="21"/>
    </location>
</feature>
<feature type="chain" id="PRO_5002240521" description="Secreted chorismate mutase" evidence="1">
    <location>
        <begin position="22"/>
        <end position="290"/>
    </location>
</feature>
<feature type="region of interest" description="KWL1-binding extensive loop region (ELR)" evidence="5">
    <location>
        <begin position="117"/>
        <end position="140"/>
    </location>
</feature>
<feature type="glycosylation site" description="N-linked (GlcNAc...) asparagine" evidence="2">
    <location>
        <position position="159"/>
    </location>
</feature>
<feature type="glycosylation site" description="N-linked (GlcNAc...) asparagine" evidence="2">
    <location>
        <position position="208"/>
    </location>
</feature>
<feature type="mutagenesis site" description="Impairs secretion and ability to act as a virulence factor." evidence="5">
    <location>
        <begin position="1"/>
        <end position="21"/>
    </location>
</feature>
<feature type="mutagenesis site" description="Abolishes the interaction with host defense KWL1." evidence="5">
    <location>
        <begin position="117"/>
        <end position="140"/>
    </location>
</feature>
<feature type="mutagenesis site" description="Impairs catalytic activity; when associated with A-193." evidence="4">
    <original>R</original>
    <variation>A</variation>
    <location>
        <position position="183"/>
    </location>
</feature>
<feature type="mutagenesis site" description="Impairs catalytic activity; when associated with A-183." evidence="4">
    <original>K</original>
    <variation>A</variation>
    <location>
        <position position="194"/>
    </location>
</feature>
<feature type="helix" evidence="7">
    <location>
        <begin position="29"/>
        <end position="47"/>
    </location>
</feature>
<feature type="helix" evidence="7">
    <location>
        <begin position="50"/>
        <end position="63"/>
    </location>
</feature>
<feature type="helix" evidence="7">
    <location>
        <begin position="70"/>
        <end position="80"/>
    </location>
</feature>
<feature type="helix" evidence="7">
    <location>
        <begin position="87"/>
        <end position="92"/>
    </location>
</feature>
<feature type="helix" evidence="7">
    <location>
        <begin position="98"/>
        <end position="101"/>
    </location>
</feature>
<feature type="turn" evidence="7">
    <location>
        <begin position="109"/>
        <end position="112"/>
    </location>
</feature>
<feature type="turn" evidence="7">
    <location>
        <begin position="130"/>
        <end position="132"/>
    </location>
</feature>
<feature type="helix" evidence="7">
    <location>
        <begin position="147"/>
        <end position="156"/>
    </location>
</feature>
<feature type="strand" evidence="7">
    <location>
        <begin position="162"/>
        <end position="164"/>
    </location>
</feature>
<feature type="helix" evidence="7">
    <location>
        <begin position="166"/>
        <end position="185"/>
    </location>
</feature>
<feature type="helix" evidence="7">
    <location>
        <begin position="187"/>
        <end position="197"/>
    </location>
</feature>
<feature type="helix" evidence="7">
    <location>
        <begin position="199"/>
        <end position="206"/>
    </location>
</feature>
<feature type="helix" evidence="7">
    <location>
        <begin position="213"/>
        <end position="224"/>
    </location>
</feature>
<feature type="helix" evidence="7">
    <location>
        <begin position="227"/>
        <end position="244"/>
    </location>
</feature>
<feature type="helix" evidence="7">
    <location>
        <begin position="258"/>
        <end position="268"/>
    </location>
</feature>
<feature type="helix" evidence="7">
    <location>
        <begin position="270"/>
        <end position="283"/>
    </location>
</feature>
<feature type="helix" evidence="7">
    <location>
        <begin position="286"/>
        <end position="288"/>
    </location>
</feature>
<dbReference type="EC" id="5.4.99.5" evidence="4"/>
<dbReference type="EMBL" id="CM003155">
    <property type="protein sequence ID" value="KIS66950.1"/>
    <property type="molecule type" value="Genomic_DNA"/>
</dbReference>
<dbReference type="RefSeq" id="XP_011391476.1">
    <property type="nucleotide sequence ID" value="XM_011393174.1"/>
</dbReference>
<dbReference type="PDB" id="6FPF">
    <property type="method" value="X-ray"/>
    <property type="resolution" value="2.20 A"/>
    <property type="chains" value="A/C/D/E=22-290"/>
</dbReference>
<dbReference type="PDB" id="6FPG">
    <property type="method" value="X-ray"/>
    <property type="resolution" value="1.80 A"/>
    <property type="chains" value="B/C/F/G=22-290"/>
</dbReference>
<dbReference type="PDB" id="6TI2">
    <property type="method" value="X-ray"/>
    <property type="resolution" value="2.75 A"/>
    <property type="chains" value="B/C=22-290"/>
</dbReference>
<dbReference type="PDBsum" id="6FPF"/>
<dbReference type="PDBsum" id="6FPG"/>
<dbReference type="PDBsum" id="6TI2"/>
<dbReference type="SMR" id="A0A0D1DWQ2"/>
<dbReference type="STRING" id="237631.A0A0D1DWQ2"/>
<dbReference type="GlyCosmos" id="A0A0D1DWQ2">
    <property type="glycosylation" value="2 sites, No reported glycans"/>
</dbReference>
<dbReference type="EnsemblFungi" id="KIS66950">
    <property type="protein sequence ID" value="KIS66950"/>
    <property type="gene ID" value="UMAG_05731"/>
</dbReference>
<dbReference type="GeneID" id="23565538"/>
<dbReference type="KEGG" id="uma:UMAG_05731"/>
<dbReference type="VEuPathDB" id="FungiDB:UMAG_05731"/>
<dbReference type="eggNOG" id="ENOG502RDQF">
    <property type="taxonomic scope" value="Eukaryota"/>
</dbReference>
<dbReference type="InParanoid" id="A0A0D1DWQ2"/>
<dbReference type="OMA" id="FQAYLIP"/>
<dbReference type="OrthoDB" id="2554237at2759"/>
<dbReference type="SABIO-RK" id="A0A0D1DWQ2"/>
<dbReference type="PHI-base" id="PHI:8816"/>
<dbReference type="Proteomes" id="UP000000561">
    <property type="component" value="Chromosome 16"/>
</dbReference>
<dbReference type="GO" id="GO:0005576">
    <property type="term" value="C:extracellular region"/>
    <property type="evidence" value="ECO:0007669"/>
    <property type="project" value="UniProtKB-SubCell"/>
</dbReference>
<dbReference type="GO" id="GO:0140593">
    <property type="term" value="C:host apoplast"/>
    <property type="evidence" value="ECO:0000304"/>
    <property type="project" value="PHI-base"/>
</dbReference>
<dbReference type="GO" id="GO:0044164">
    <property type="term" value="C:host cell cytosol"/>
    <property type="evidence" value="ECO:0000304"/>
    <property type="project" value="PHI-base"/>
</dbReference>
<dbReference type="GO" id="GO:0004106">
    <property type="term" value="F:chorismate mutase activity"/>
    <property type="evidence" value="ECO:0000314"/>
    <property type="project" value="PHI-base"/>
</dbReference>
<dbReference type="GO" id="GO:0009073">
    <property type="term" value="P:aromatic amino acid family biosynthetic process"/>
    <property type="evidence" value="ECO:0007669"/>
    <property type="project" value="InterPro"/>
</dbReference>
<dbReference type="GO" id="GO:0046417">
    <property type="term" value="P:chorismate metabolic process"/>
    <property type="evidence" value="ECO:0007669"/>
    <property type="project" value="InterPro"/>
</dbReference>
<dbReference type="GO" id="GO:0140502">
    <property type="term" value="P:effector-mediated suppression of host salicylic acid-mediated innate immune signaling"/>
    <property type="evidence" value="ECO:0000314"/>
    <property type="project" value="PHI-base"/>
</dbReference>
<dbReference type="Gene3D" id="1.10.590.10">
    <property type="entry name" value="Chorismate mutase, AroQ class superfamily, eukaryotic"/>
    <property type="match status" value="1"/>
</dbReference>
<dbReference type="InterPro" id="IPR036263">
    <property type="entry name" value="Chorismate_II_sf"/>
</dbReference>
<dbReference type="InterPro" id="IPR037039">
    <property type="entry name" value="CM_AroQ_sf_eucaryotic"/>
</dbReference>
<dbReference type="SUPFAM" id="SSF48600">
    <property type="entry name" value="Chorismate mutase II"/>
    <property type="match status" value="1"/>
</dbReference>
<evidence type="ECO:0000255" key="1"/>
<evidence type="ECO:0000255" key="2">
    <source>
        <dbReference type="PROSITE-ProRule" id="PRU00498"/>
    </source>
</evidence>
<evidence type="ECO:0000269" key="3">
    <source>
    </source>
</evidence>
<evidence type="ECO:0000269" key="4">
    <source>
    </source>
</evidence>
<evidence type="ECO:0000269" key="5">
    <source>
    </source>
</evidence>
<evidence type="ECO:0000303" key="6">
    <source>
    </source>
</evidence>
<evidence type="ECO:0007829" key="7">
    <source>
        <dbReference type="PDB" id="6FPG"/>
    </source>
</evidence>
<proteinExistence type="evidence at protein level"/>